<organism>
    <name type="scientific">Bradyrhizobium sp. (strain ORS 278)</name>
    <dbReference type="NCBI Taxonomy" id="114615"/>
    <lineage>
        <taxon>Bacteria</taxon>
        <taxon>Pseudomonadati</taxon>
        <taxon>Pseudomonadota</taxon>
        <taxon>Alphaproteobacteria</taxon>
        <taxon>Hyphomicrobiales</taxon>
        <taxon>Nitrobacteraceae</taxon>
        <taxon>Bradyrhizobium</taxon>
    </lineage>
</organism>
<protein>
    <recommendedName>
        <fullName evidence="1">1-deoxy-D-xylulose-5-phosphate synthase</fullName>
        <ecNumber evidence="1">2.2.1.7</ecNumber>
    </recommendedName>
    <alternativeName>
        <fullName evidence="1">1-deoxyxylulose-5-phosphate synthase</fullName>
        <shortName evidence="1">DXP synthase</shortName>
        <shortName evidence="1">DXPS</shortName>
    </alternativeName>
</protein>
<keyword id="KW-0414">Isoprene biosynthesis</keyword>
<keyword id="KW-0460">Magnesium</keyword>
<keyword id="KW-0479">Metal-binding</keyword>
<keyword id="KW-1185">Reference proteome</keyword>
<keyword id="KW-0784">Thiamine biosynthesis</keyword>
<keyword id="KW-0786">Thiamine pyrophosphate</keyword>
<keyword id="KW-0808">Transferase</keyword>
<dbReference type="EC" id="2.2.1.7" evidence="1"/>
<dbReference type="EMBL" id="CU234118">
    <property type="protein sequence ID" value="CAL76012.1"/>
    <property type="molecule type" value="Genomic_DNA"/>
</dbReference>
<dbReference type="RefSeq" id="WP_011925232.1">
    <property type="nucleotide sequence ID" value="NC_009445.1"/>
</dbReference>
<dbReference type="SMR" id="A4YQ36"/>
<dbReference type="STRING" id="114615.BRADO2161"/>
<dbReference type="KEGG" id="bra:BRADO2161"/>
<dbReference type="eggNOG" id="COG1154">
    <property type="taxonomic scope" value="Bacteria"/>
</dbReference>
<dbReference type="HOGENOM" id="CLU_009227_1_4_5"/>
<dbReference type="OrthoDB" id="9803371at2"/>
<dbReference type="UniPathway" id="UPA00064">
    <property type="reaction ID" value="UER00091"/>
</dbReference>
<dbReference type="Proteomes" id="UP000001994">
    <property type="component" value="Chromosome"/>
</dbReference>
<dbReference type="GO" id="GO:0008661">
    <property type="term" value="F:1-deoxy-D-xylulose-5-phosphate synthase activity"/>
    <property type="evidence" value="ECO:0007669"/>
    <property type="project" value="UniProtKB-UniRule"/>
</dbReference>
<dbReference type="GO" id="GO:0000287">
    <property type="term" value="F:magnesium ion binding"/>
    <property type="evidence" value="ECO:0007669"/>
    <property type="project" value="UniProtKB-UniRule"/>
</dbReference>
<dbReference type="GO" id="GO:0030976">
    <property type="term" value="F:thiamine pyrophosphate binding"/>
    <property type="evidence" value="ECO:0007669"/>
    <property type="project" value="UniProtKB-UniRule"/>
</dbReference>
<dbReference type="GO" id="GO:0052865">
    <property type="term" value="P:1-deoxy-D-xylulose 5-phosphate biosynthetic process"/>
    <property type="evidence" value="ECO:0007669"/>
    <property type="project" value="UniProtKB-UniPathway"/>
</dbReference>
<dbReference type="GO" id="GO:0019682">
    <property type="term" value="P:glyceraldehyde-3-phosphate metabolic process"/>
    <property type="evidence" value="ECO:0007669"/>
    <property type="project" value="UniProtKB-ARBA"/>
</dbReference>
<dbReference type="GO" id="GO:0016114">
    <property type="term" value="P:terpenoid biosynthetic process"/>
    <property type="evidence" value="ECO:0007669"/>
    <property type="project" value="UniProtKB-UniRule"/>
</dbReference>
<dbReference type="GO" id="GO:0009228">
    <property type="term" value="P:thiamine biosynthetic process"/>
    <property type="evidence" value="ECO:0007669"/>
    <property type="project" value="UniProtKB-UniRule"/>
</dbReference>
<dbReference type="CDD" id="cd02007">
    <property type="entry name" value="TPP_DXS"/>
    <property type="match status" value="1"/>
</dbReference>
<dbReference type="CDD" id="cd07033">
    <property type="entry name" value="TPP_PYR_DXS_TK_like"/>
    <property type="match status" value="1"/>
</dbReference>
<dbReference type="FunFam" id="3.40.50.920:FF:000002">
    <property type="entry name" value="1-deoxy-D-xylulose-5-phosphate synthase"/>
    <property type="match status" value="1"/>
</dbReference>
<dbReference type="FunFam" id="3.40.50.970:FF:000005">
    <property type="entry name" value="1-deoxy-D-xylulose-5-phosphate synthase"/>
    <property type="match status" value="1"/>
</dbReference>
<dbReference type="Gene3D" id="3.40.50.920">
    <property type="match status" value="1"/>
</dbReference>
<dbReference type="Gene3D" id="3.40.50.970">
    <property type="match status" value="2"/>
</dbReference>
<dbReference type="HAMAP" id="MF_00315">
    <property type="entry name" value="DXP_synth"/>
    <property type="match status" value="1"/>
</dbReference>
<dbReference type="InterPro" id="IPR005477">
    <property type="entry name" value="Dxylulose-5-P_synthase"/>
</dbReference>
<dbReference type="InterPro" id="IPR029061">
    <property type="entry name" value="THDP-binding"/>
</dbReference>
<dbReference type="InterPro" id="IPR009014">
    <property type="entry name" value="Transketo_C/PFOR_II"/>
</dbReference>
<dbReference type="InterPro" id="IPR005475">
    <property type="entry name" value="Transketolase-like_Pyr-bd"/>
</dbReference>
<dbReference type="InterPro" id="IPR020826">
    <property type="entry name" value="Transketolase_BS"/>
</dbReference>
<dbReference type="InterPro" id="IPR033248">
    <property type="entry name" value="Transketolase_C"/>
</dbReference>
<dbReference type="InterPro" id="IPR049557">
    <property type="entry name" value="Transketolase_CS"/>
</dbReference>
<dbReference type="NCBIfam" id="TIGR00204">
    <property type="entry name" value="dxs"/>
    <property type="match status" value="1"/>
</dbReference>
<dbReference type="NCBIfam" id="NF003933">
    <property type="entry name" value="PRK05444.2-2"/>
    <property type="match status" value="1"/>
</dbReference>
<dbReference type="PANTHER" id="PTHR43322">
    <property type="entry name" value="1-D-DEOXYXYLULOSE 5-PHOSPHATE SYNTHASE-RELATED"/>
    <property type="match status" value="1"/>
</dbReference>
<dbReference type="PANTHER" id="PTHR43322:SF5">
    <property type="entry name" value="1-DEOXY-D-XYLULOSE-5-PHOSPHATE SYNTHASE, CHLOROPLASTIC"/>
    <property type="match status" value="1"/>
</dbReference>
<dbReference type="Pfam" id="PF13292">
    <property type="entry name" value="DXP_synthase_N"/>
    <property type="match status" value="1"/>
</dbReference>
<dbReference type="Pfam" id="PF02779">
    <property type="entry name" value="Transket_pyr"/>
    <property type="match status" value="1"/>
</dbReference>
<dbReference type="Pfam" id="PF02780">
    <property type="entry name" value="Transketolase_C"/>
    <property type="match status" value="1"/>
</dbReference>
<dbReference type="SMART" id="SM00861">
    <property type="entry name" value="Transket_pyr"/>
    <property type="match status" value="1"/>
</dbReference>
<dbReference type="SUPFAM" id="SSF52518">
    <property type="entry name" value="Thiamin diphosphate-binding fold (THDP-binding)"/>
    <property type="match status" value="2"/>
</dbReference>
<dbReference type="SUPFAM" id="SSF52922">
    <property type="entry name" value="TK C-terminal domain-like"/>
    <property type="match status" value="1"/>
</dbReference>
<dbReference type="PROSITE" id="PS00801">
    <property type="entry name" value="TRANSKETOLASE_1"/>
    <property type="match status" value="1"/>
</dbReference>
<dbReference type="PROSITE" id="PS00802">
    <property type="entry name" value="TRANSKETOLASE_2"/>
    <property type="match status" value="1"/>
</dbReference>
<accession>A4YQ36</accession>
<evidence type="ECO:0000255" key="1">
    <source>
        <dbReference type="HAMAP-Rule" id="MF_00315"/>
    </source>
</evidence>
<comment type="function">
    <text evidence="1">Catalyzes the acyloin condensation reaction between C atoms 2 and 3 of pyruvate and glyceraldehyde 3-phosphate to yield 1-deoxy-D-xylulose-5-phosphate (DXP).</text>
</comment>
<comment type="catalytic activity">
    <reaction evidence="1">
        <text>D-glyceraldehyde 3-phosphate + pyruvate + H(+) = 1-deoxy-D-xylulose 5-phosphate + CO2</text>
        <dbReference type="Rhea" id="RHEA:12605"/>
        <dbReference type="ChEBI" id="CHEBI:15361"/>
        <dbReference type="ChEBI" id="CHEBI:15378"/>
        <dbReference type="ChEBI" id="CHEBI:16526"/>
        <dbReference type="ChEBI" id="CHEBI:57792"/>
        <dbReference type="ChEBI" id="CHEBI:59776"/>
        <dbReference type="EC" id="2.2.1.7"/>
    </reaction>
</comment>
<comment type="cofactor">
    <cofactor evidence="1">
        <name>Mg(2+)</name>
        <dbReference type="ChEBI" id="CHEBI:18420"/>
    </cofactor>
    <text evidence="1">Binds 1 Mg(2+) ion per subunit.</text>
</comment>
<comment type="cofactor">
    <cofactor evidence="1">
        <name>thiamine diphosphate</name>
        <dbReference type="ChEBI" id="CHEBI:58937"/>
    </cofactor>
    <text evidence="1">Binds 1 thiamine pyrophosphate per subunit.</text>
</comment>
<comment type="pathway">
    <text evidence="1">Metabolic intermediate biosynthesis; 1-deoxy-D-xylulose 5-phosphate biosynthesis; 1-deoxy-D-xylulose 5-phosphate from D-glyceraldehyde 3-phosphate and pyruvate: step 1/1.</text>
</comment>
<comment type="subunit">
    <text evidence="1">Homodimer.</text>
</comment>
<comment type="similarity">
    <text evidence="1">Belongs to the transketolase family. DXPS subfamily.</text>
</comment>
<gene>
    <name evidence="1" type="primary">dxs</name>
    <name type="ordered locus">BRADO2161</name>
</gene>
<feature type="chain" id="PRO_1000205066" description="1-deoxy-D-xylulose-5-phosphate synthase">
    <location>
        <begin position="1"/>
        <end position="641"/>
    </location>
</feature>
<feature type="binding site" evidence="1">
    <location>
        <position position="79"/>
    </location>
    <ligand>
        <name>thiamine diphosphate</name>
        <dbReference type="ChEBI" id="CHEBI:58937"/>
    </ligand>
</feature>
<feature type="binding site" evidence="1">
    <location>
        <begin position="120"/>
        <end position="122"/>
    </location>
    <ligand>
        <name>thiamine diphosphate</name>
        <dbReference type="ChEBI" id="CHEBI:58937"/>
    </ligand>
</feature>
<feature type="binding site" evidence="1">
    <location>
        <position position="151"/>
    </location>
    <ligand>
        <name>Mg(2+)</name>
        <dbReference type="ChEBI" id="CHEBI:18420"/>
    </ligand>
</feature>
<feature type="binding site" evidence="1">
    <location>
        <begin position="152"/>
        <end position="153"/>
    </location>
    <ligand>
        <name>thiamine diphosphate</name>
        <dbReference type="ChEBI" id="CHEBI:58937"/>
    </ligand>
</feature>
<feature type="binding site" evidence="1">
    <location>
        <position position="180"/>
    </location>
    <ligand>
        <name>Mg(2+)</name>
        <dbReference type="ChEBI" id="CHEBI:18420"/>
    </ligand>
</feature>
<feature type="binding site" evidence="1">
    <location>
        <position position="180"/>
    </location>
    <ligand>
        <name>thiamine diphosphate</name>
        <dbReference type="ChEBI" id="CHEBI:58937"/>
    </ligand>
</feature>
<feature type="binding site" evidence="1">
    <location>
        <position position="290"/>
    </location>
    <ligand>
        <name>thiamine diphosphate</name>
        <dbReference type="ChEBI" id="CHEBI:58937"/>
    </ligand>
</feature>
<feature type="binding site" evidence="1">
    <location>
        <position position="372"/>
    </location>
    <ligand>
        <name>thiamine diphosphate</name>
        <dbReference type="ChEBI" id="CHEBI:58937"/>
    </ligand>
</feature>
<sequence>MTTFSKTPLLDTIKTPEDLRRLKVEQVRQVADELRQETIDAVSVTGGHFGAGLGVVELTTAIHYVFDTPRDRLIWDVGHQAYPHKILTGRRDRIRTLRTGGGLSGFTKRAESDYDPFGAAHSSTSISAGLGMAVARDLSGGKNNVIAVIGDGAMSAGMAYEAMNNAGAMNSRLIVILNDNDMSIAPPVGAMSAYLSRLYSGKTYRTLRDAAKQLGQHLPKVIANRASRVEEYSRGFMMDGGTLFEELGFYYVGPIDGHNLDHLLPVLKNVRDMETGPILVHVVTQKGKGYSPAEAAADKYHAVAKFDIATGTQAKAKPNAPAYQNVFGQSLVKEAEKDEKIVGITAAMPSGTGIDIFAKAFPKRTFDVGIAEQHAVTFAAGLAAEGYKPFCAIYSTFLQRGYDQIVHDVCIQSLPVRFAIDRAGLVGADGATHAGSFDNAYLGCLPNMVIMAASDEAELVHMVATQVAIDDRPSSVRYPRGEGRGVEMPEVGVALPIGKGRMIRQGKQVALLSFGTRLAECEKAADELAAHGLSASIADARFMKPLDEELVLKLARDHEILITIEEGSIGGFGSHVMQYLADQGMLDGGLKMRSMVLPDEFQDHDTPAAMYARAGLDAKGIVRKVFEVLGKDYAAEAVKLA</sequence>
<reference key="1">
    <citation type="journal article" date="2007" name="Science">
        <title>Legumes symbioses: absence of nod genes in photosynthetic bradyrhizobia.</title>
        <authorList>
            <person name="Giraud E."/>
            <person name="Moulin L."/>
            <person name="Vallenet D."/>
            <person name="Barbe V."/>
            <person name="Cytryn E."/>
            <person name="Avarre J.-C."/>
            <person name="Jaubert M."/>
            <person name="Simon D."/>
            <person name="Cartieaux F."/>
            <person name="Prin Y."/>
            <person name="Bena G."/>
            <person name="Hannibal L."/>
            <person name="Fardoux J."/>
            <person name="Kojadinovic M."/>
            <person name="Vuillet L."/>
            <person name="Lajus A."/>
            <person name="Cruveiller S."/>
            <person name="Rouy Z."/>
            <person name="Mangenot S."/>
            <person name="Segurens B."/>
            <person name="Dossat C."/>
            <person name="Franck W.L."/>
            <person name="Chang W.-S."/>
            <person name="Saunders E."/>
            <person name="Bruce D."/>
            <person name="Richardson P."/>
            <person name="Normand P."/>
            <person name="Dreyfus B."/>
            <person name="Pignol D."/>
            <person name="Stacey G."/>
            <person name="Emerich D."/>
            <person name="Vermeglio A."/>
            <person name="Medigue C."/>
            <person name="Sadowsky M."/>
        </authorList>
    </citation>
    <scope>NUCLEOTIDE SEQUENCE [LARGE SCALE GENOMIC DNA]</scope>
    <source>
        <strain>ORS 278</strain>
    </source>
</reference>
<proteinExistence type="inferred from homology"/>
<name>DXS_BRASO</name>